<evidence type="ECO:0000255" key="1">
    <source>
        <dbReference type="HAMAP-Rule" id="MF_00258"/>
    </source>
</evidence>
<accession>A6U9N0</accession>
<protein>
    <recommendedName>
        <fullName evidence="1">Glutamate racemase</fullName>
        <ecNumber evidence="1">5.1.1.3</ecNumber>
    </recommendedName>
</protein>
<dbReference type="EC" id="5.1.1.3" evidence="1"/>
<dbReference type="EMBL" id="CP000738">
    <property type="protein sequence ID" value="ABR60360.1"/>
    <property type="molecule type" value="Genomic_DNA"/>
</dbReference>
<dbReference type="RefSeq" id="WP_011975669.1">
    <property type="nucleotide sequence ID" value="NC_009636.1"/>
</dbReference>
<dbReference type="RefSeq" id="YP_001327195.1">
    <property type="nucleotide sequence ID" value="NC_009636.1"/>
</dbReference>
<dbReference type="SMR" id="A6U9N0"/>
<dbReference type="STRING" id="366394.Smed_1516"/>
<dbReference type="GeneID" id="61612749"/>
<dbReference type="KEGG" id="smd:Smed_1516"/>
<dbReference type="PATRIC" id="fig|366394.8.peg.4649"/>
<dbReference type="eggNOG" id="COG0796">
    <property type="taxonomic scope" value="Bacteria"/>
</dbReference>
<dbReference type="HOGENOM" id="CLU_052344_2_0_5"/>
<dbReference type="OrthoDB" id="9801055at2"/>
<dbReference type="UniPathway" id="UPA00219"/>
<dbReference type="Proteomes" id="UP000001108">
    <property type="component" value="Chromosome"/>
</dbReference>
<dbReference type="GO" id="GO:0008881">
    <property type="term" value="F:glutamate racemase activity"/>
    <property type="evidence" value="ECO:0007669"/>
    <property type="project" value="UniProtKB-UniRule"/>
</dbReference>
<dbReference type="GO" id="GO:0071555">
    <property type="term" value="P:cell wall organization"/>
    <property type="evidence" value="ECO:0007669"/>
    <property type="project" value="UniProtKB-KW"/>
</dbReference>
<dbReference type="GO" id="GO:0009252">
    <property type="term" value="P:peptidoglycan biosynthetic process"/>
    <property type="evidence" value="ECO:0007669"/>
    <property type="project" value="UniProtKB-UniRule"/>
</dbReference>
<dbReference type="GO" id="GO:0008360">
    <property type="term" value="P:regulation of cell shape"/>
    <property type="evidence" value="ECO:0007669"/>
    <property type="project" value="UniProtKB-KW"/>
</dbReference>
<dbReference type="Gene3D" id="3.40.50.1860">
    <property type="match status" value="2"/>
</dbReference>
<dbReference type="HAMAP" id="MF_00258">
    <property type="entry name" value="Glu_racemase"/>
    <property type="match status" value="1"/>
</dbReference>
<dbReference type="InterPro" id="IPR015942">
    <property type="entry name" value="Asp/Glu/hydantoin_racemase"/>
</dbReference>
<dbReference type="InterPro" id="IPR001920">
    <property type="entry name" value="Asp/Glu_race"/>
</dbReference>
<dbReference type="InterPro" id="IPR033134">
    <property type="entry name" value="Asp/Glu_racemase_AS_2"/>
</dbReference>
<dbReference type="InterPro" id="IPR004391">
    <property type="entry name" value="Glu_race"/>
</dbReference>
<dbReference type="NCBIfam" id="TIGR00067">
    <property type="entry name" value="glut_race"/>
    <property type="match status" value="1"/>
</dbReference>
<dbReference type="PANTHER" id="PTHR21198">
    <property type="entry name" value="GLUTAMATE RACEMASE"/>
    <property type="match status" value="1"/>
</dbReference>
<dbReference type="PANTHER" id="PTHR21198:SF2">
    <property type="entry name" value="GLUTAMATE RACEMASE"/>
    <property type="match status" value="1"/>
</dbReference>
<dbReference type="Pfam" id="PF01177">
    <property type="entry name" value="Asp_Glu_race"/>
    <property type="match status" value="1"/>
</dbReference>
<dbReference type="SUPFAM" id="SSF53681">
    <property type="entry name" value="Aspartate/glutamate racemase"/>
    <property type="match status" value="2"/>
</dbReference>
<dbReference type="PROSITE" id="PS00924">
    <property type="entry name" value="ASP_GLU_RACEMASE_2"/>
    <property type="match status" value="1"/>
</dbReference>
<name>MURI_SINMW</name>
<proteinExistence type="inferred from homology"/>
<feature type="chain" id="PRO_1000047612" description="Glutamate racemase">
    <location>
        <begin position="1"/>
        <end position="271"/>
    </location>
</feature>
<feature type="active site" description="Proton donor/acceptor" evidence="1">
    <location>
        <position position="77"/>
    </location>
</feature>
<feature type="active site" description="Proton donor/acceptor" evidence="1">
    <location>
        <position position="192"/>
    </location>
</feature>
<feature type="binding site" evidence="1">
    <location>
        <begin position="13"/>
        <end position="14"/>
    </location>
    <ligand>
        <name>substrate</name>
    </ligand>
</feature>
<feature type="binding site" evidence="1">
    <location>
        <begin position="45"/>
        <end position="46"/>
    </location>
    <ligand>
        <name>substrate</name>
    </ligand>
</feature>
<feature type="binding site" evidence="1">
    <location>
        <begin position="78"/>
        <end position="79"/>
    </location>
    <ligand>
        <name>substrate</name>
    </ligand>
</feature>
<feature type="binding site" evidence="1">
    <location>
        <begin position="193"/>
        <end position="194"/>
    </location>
    <ligand>
        <name>substrate</name>
    </ligand>
</feature>
<gene>
    <name evidence="1" type="primary">murI</name>
    <name type="ordered locus">Smed_1516</name>
</gene>
<reference key="1">
    <citation type="submission" date="2007-06" db="EMBL/GenBank/DDBJ databases">
        <title>Complete sequence of Sinorhizobium medicae WSM419 chromosome.</title>
        <authorList>
            <consortium name="US DOE Joint Genome Institute"/>
            <person name="Copeland A."/>
            <person name="Lucas S."/>
            <person name="Lapidus A."/>
            <person name="Barry K."/>
            <person name="Glavina del Rio T."/>
            <person name="Dalin E."/>
            <person name="Tice H."/>
            <person name="Pitluck S."/>
            <person name="Chain P."/>
            <person name="Malfatti S."/>
            <person name="Shin M."/>
            <person name="Vergez L."/>
            <person name="Schmutz J."/>
            <person name="Larimer F."/>
            <person name="Land M."/>
            <person name="Hauser L."/>
            <person name="Kyrpides N."/>
            <person name="Mikhailova N."/>
            <person name="Reeve W.G."/>
            <person name="Richardson P."/>
        </authorList>
    </citation>
    <scope>NUCLEOTIDE SEQUENCE [LARGE SCALE GENOMIC DNA]</scope>
    <source>
        <strain>WSM419</strain>
    </source>
</reference>
<organism>
    <name type="scientific">Sinorhizobium medicae (strain WSM419)</name>
    <name type="common">Ensifer medicae</name>
    <dbReference type="NCBI Taxonomy" id="366394"/>
    <lineage>
        <taxon>Bacteria</taxon>
        <taxon>Pseudomonadati</taxon>
        <taxon>Pseudomonadota</taxon>
        <taxon>Alphaproteobacteria</taxon>
        <taxon>Hyphomicrobiales</taxon>
        <taxon>Rhizobiaceae</taxon>
        <taxon>Sinorhizobium/Ensifer group</taxon>
        <taxon>Sinorhizobium</taxon>
    </lineage>
</organism>
<comment type="function">
    <text evidence="1">Provides the (R)-glutamate required for cell wall biosynthesis.</text>
</comment>
<comment type="catalytic activity">
    <reaction evidence="1">
        <text>L-glutamate = D-glutamate</text>
        <dbReference type="Rhea" id="RHEA:12813"/>
        <dbReference type="ChEBI" id="CHEBI:29985"/>
        <dbReference type="ChEBI" id="CHEBI:29986"/>
        <dbReference type="EC" id="5.1.1.3"/>
    </reaction>
</comment>
<comment type="pathway">
    <text evidence="1">Cell wall biogenesis; peptidoglycan biosynthesis.</text>
</comment>
<comment type="similarity">
    <text evidence="1">Belongs to the aspartate/glutamate racemases family.</text>
</comment>
<sequence>MTKTELKPILVFDSGIGGLTVLREARVLMPERHFIYVADDAGFPYGGWEEGALKERVIALFGRLLAEHDPEICIIACNTAFTLVGADLRIVYPQMTFVGTVPAIKPAAERTRSGLVSVLATPGTVKRAYTRDLIQSFASQCHVRLVGSENLARMAEAYIRGEALTDDAVRAEIAPCFVEVDGKRTDIVVLACTHYPFVANVFRRLAPWPVDWLDPAEAIARRARSLVPLPNGFEPLNGEDPAIFTSGKPDFATRRLMQGFGLKVAAVGSLG</sequence>
<keyword id="KW-0133">Cell shape</keyword>
<keyword id="KW-0961">Cell wall biogenesis/degradation</keyword>
<keyword id="KW-0413">Isomerase</keyword>
<keyword id="KW-0573">Peptidoglycan synthesis</keyword>